<evidence type="ECO:0000250" key="1"/>
<evidence type="ECO:0000255" key="2"/>
<evidence type="ECO:0000256" key="3">
    <source>
        <dbReference type="SAM" id="MobiDB-lite"/>
    </source>
</evidence>
<evidence type="ECO:0000305" key="4"/>
<name>PIP1_SOLLC</name>
<proteinExistence type="evidence at transcript level"/>
<reference key="1">
    <citation type="journal article" date="1994" name="Plant Mol. Biol.">
        <title>Nucleotide sequence and expression of a ripening and water stress-related cDNA from tomato with homology to the MIP class of membrane channel proteins.</title>
        <authorList>
            <person name="Fray R.G."/>
            <person name="Wallace A."/>
            <person name="Grierson D."/>
            <person name="Lycett G.W."/>
        </authorList>
    </citation>
    <scope>NUCLEOTIDE SEQUENCE [MRNA]</scope>
</reference>
<dbReference type="EMBL" id="X73848">
    <property type="protein sequence ID" value="CAA52068.1"/>
    <property type="molecule type" value="mRNA"/>
</dbReference>
<dbReference type="EMBL" id="X73847">
    <property type="protein sequence ID" value="CAA52067.1"/>
    <property type="molecule type" value="mRNA"/>
</dbReference>
<dbReference type="PIR" id="S42542">
    <property type="entry name" value="S42542"/>
</dbReference>
<dbReference type="RefSeq" id="NP_001234139.1">
    <property type="nucleotide sequence ID" value="NM_001247210.2"/>
</dbReference>
<dbReference type="SMR" id="Q08451"/>
<dbReference type="FunCoup" id="Q08451">
    <property type="interactions" value="551"/>
</dbReference>
<dbReference type="STRING" id="4081.Q08451"/>
<dbReference type="PaxDb" id="4081-Solyc08g081190.2.1"/>
<dbReference type="EnsemblPlants" id="Solyc08g081190.3.1">
    <property type="protein sequence ID" value="Solyc08g081190.3.1"/>
    <property type="gene ID" value="Solyc08g081190.3"/>
</dbReference>
<dbReference type="GeneID" id="544086"/>
<dbReference type="Gramene" id="Solyc08g081190.3.1">
    <property type="protein sequence ID" value="Solyc08g081190.3.1"/>
    <property type="gene ID" value="Solyc08g081190.3"/>
</dbReference>
<dbReference type="KEGG" id="sly:544086"/>
<dbReference type="eggNOG" id="KOG0223">
    <property type="taxonomic scope" value="Eukaryota"/>
</dbReference>
<dbReference type="HOGENOM" id="CLU_020019_3_0_1"/>
<dbReference type="InParanoid" id="Q08451"/>
<dbReference type="OMA" id="EDHRRHE"/>
<dbReference type="OrthoDB" id="3222at2759"/>
<dbReference type="PhylomeDB" id="Q08451"/>
<dbReference type="Proteomes" id="UP000004994">
    <property type="component" value="Chromosome 8"/>
</dbReference>
<dbReference type="ExpressionAtlas" id="Q08451">
    <property type="expression patterns" value="baseline and differential"/>
</dbReference>
<dbReference type="GO" id="GO:0005886">
    <property type="term" value="C:plasma membrane"/>
    <property type="evidence" value="ECO:0000318"/>
    <property type="project" value="GO_Central"/>
</dbReference>
<dbReference type="GO" id="GO:0015250">
    <property type="term" value="F:water channel activity"/>
    <property type="evidence" value="ECO:0000318"/>
    <property type="project" value="GO_Central"/>
</dbReference>
<dbReference type="GO" id="GO:0009414">
    <property type="term" value="P:response to water deprivation"/>
    <property type="evidence" value="ECO:0000318"/>
    <property type="project" value="GO_Central"/>
</dbReference>
<dbReference type="CDD" id="cd00333">
    <property type="entry name" value="MIP"/>
    <property type="match status" value="1"/>
</dbReference>
<dbReference type="FunFam" id="1.20.1080.10:FF:000001">
    <property type="entry name" value="Probable aquaporin PIP1-2"/>
    <property type="match status" value="1"/>
</dbReference>
<dbReference type="Gene3D" id="1.20.1080.10">
    <property type="entry name" value="Glycerol uptake facilitator protein"/>
    <property type="match status" value="1"/>
</dbReference>
<dbReference type="InterPro" id="IPR023271">
    <property type="entry name" value="Aquaporin-like"/>
</dbReference>
<dbReference type="InterPro" id="IPR034294">
    <property type="entry name" value="Aquaporin_transptr"/>
</dbReference>
<dbReference type="InterPro" id="IPR000425">
    <property type="entry name" value="MIP"/>
</dbReference>
<dbReference type="InterPro" id="IPR022357">
    <property type="entry name" value="MIP_CS"/>
</dbReference>
<dbReference type="NCBIfam" id="TIGR00861">
    <property type="entry name" value="MIP"/>
    <property type="match status" value="1"/>
</dbReference>
<dbReference type="PANTHER" id="PTHR45687">
    <property type="entry name" value="AQUAPORIN OR AQUAGLYCEROPORIN RELATED"/>
    <property type="match status" value="1"/>
</dbReference>
<dbReference type="Pfam" id="PF00230">
    <property type="entry name" value="MIP"/>
    <property type="match status" value="1"/>
</dbReference>
<dbReference type="PRINTS" id="PR00783">
    <property type="entry name" value="MINTRINSICP"/>
</dbReference>
<dbReference type="SUPFAM" id="SSF81338">
    <property type="entry name" value="Aquaporin-like"/>
    <property type="match status" value="1"/>
</dbReference>
<dbReference type="PROSITE" id="PS00221">
    <property type="entry name" value="MIP"/>
    <property type="match status" value="1"/>
</dbReference>
<feature type="chain" id="PRO_0000064059" description="Probable aquaporin PIP-type pTOM75">
    <location>
        <begin position="1"/>
        <end position="286"/>
    </location>
</feature>
<feature type="topological domain" description="Cytoplasmic" evidence="2">
    <location>
        <begin position="1"/>
        <end position="55"/>
    </location>
</feature>
<feature type="transmembrane region" description="Helical; Name=1" evidence="2">
    <location>
        <begin position="56"/>
        <end position="76"/>
    </location>
</feature>
<feature type="topological domain" description="Extracellular" evidence="2">
    <location>
        <begin position="77"/>
        <end position="89"/>
    </location>
</feature>
<feature type="transmembrane region" description="Helical; Name=2" evidence="2">
    <location>
        <begin position="90"/>
        <end position="110"/>
    </location>
</feature>
<feature type="topological domain" description="Cytoplasmic" evidence="2">
    <location>
        <begin position="111"/>
        <end position="133"/>
    </location>
</feature>
<feature type="transmembrane region" description="Helical; Name=3" evidence="2">
    <location>
        <begin position="134"/>
        <end position="154"/>
    </location>
</feature>
<feature type="topological domain" description="Extracellular" evidence="2">
    <location>
        <begin position="155"/>
        <end position="175"/>
    </location>
</feature>
<feature type="transmembrane region" description="Helical; Name=4" evidence="2">
    <location>
        <begin position="176"/>
        <end position="196"/>
    </location>
</feature>
<feature type="topological domain" description="Cytoplasmic" evidence="2">
    <location>
        <begin position="197"/>
        <end position="209"/>
    </location>
</feature>
<feature type="transmembrane region" description="Helical; Name=5" evidence="2">
    <location>
        <begin position="210"/>
        <end position="230"/>
    </location>
</feature>
<feature type="topological domain" description="Extracellular" evidence="2">
    <location>
        <begin position="231"/>
        <end position="257"/>
    </location>
</feature>
<feature type="transmembrane region" description="Helical; Name=6" evidence="2">
    <location>
        <begin position="258"/>
        <end position="278"/>
    </location>
</feature>
<feature type="topological domain" description="Cytoplasmic" evidence="2">
    <location>
        <begin position="279"/>
        <end position="286"/>
    </location>
</feature>
<feature type="region of interest" description="Disordered" evidence="3">
    <location>
        <begin position="1"/>
        <end position="35"/>
    </location>
</feature>
<feature type="short sequence motif" description="NPA 1">
    <location>
        <begin position="115"/>
        <end position="117"/>
    </location>
</feature>
<feature type="short sequence motif" description="NPA 2">
    <location>
        <begin position="236"/>
        <end position="238"/>
    </location>
</feature>
<feature type="compositionally biased region" description="Basic and acidic residues" evidence="3">
    <location>
        <begin position="7"/>
        <end position="18"/>
    </location>
</feature>
<comment type="function">
    <text evidence="1">Aquaporins facilitate the transport of water and small neutral solutes across cell membranes.</text>
</comment>
<comment type="subcellular location">
    <subcellularLocation>
        <location evidence="1">Cell membrane</location>
        <topology evidence="1">Multi-pass membrane protein</topology>
    </subcellularLocation>
</comment>
<comment type="tissue specificity">
    <text>Roots, ripening fruit and senescing leaves.</text>
</comment>
<comment type="induction">
    <text>By water stress.</text>
</comment>
<comment type="domain">
    <text>Aquaporins contain two tandem repeats each containing three membrane-spanning domains and a pore-forming loop with the signature motif Asn-Pro-Ala (NPA).</text>
</comment>
<comment type="similarity">
    <text evidence="4">Belongs to the MIP/aquaporin (TC 1.A.8) family. PIP (TC 1.A.8.11) subfamily.</text>
</comment>
<keyword id="KW-1003">Cell membrane</keyword>
<keyword id="KW-0472">Membrane</keyword>
<keyword id="KW-1185">Reference proteome</keyword>
<keyword id="KW-0677">Repeat</keyword>
<keyword id="KW-0346">Stress response</keyword>
<keyword id="KW-0812">Transmembrane</keyword>
<keyword id="KW-1133">Transmembrane helix</keyword>
<keyword id="KW-0813">Transport</keyword>
<organism>
    <name type="scientific">Solanum lycopersicum</name>
    <name type="common">Tomato</name>
    <name type="synonym">Lycopersicon esculentum</name>
    <dbReference type="NCBI Taxonomy" id="4081"/>
    <lineage>
        <taxon>Eukaryota</taxon>
        <taxon>Viridiplantae</taxon>
        <taxon>Streptophyta</taxon>
        <taxon>Embryophyta</taxon>
        <taxon>Tracheophyta</taxon>
        <taxon>Spermatophyta</taxon>
        <taxon>Magnoliopsida</taxon>
        <taxon>eudicotyledons</taxon>
        <taxon>Gunneridae</taxon>
        <taxon>Pentapetalae</taxon>
        <taxon>asterids</taxon>
        <taxon>lamiids</taxon>
        <taxon>Solanales</taxon>
        <taxon>Solanaceae</taxon>
        <taxon>Solanoideae</taxon>
        <taxon>Solaneae</taxon>
        <taxon>Solanum</taxon>
        <taxon>Solanum subgen. Lycopersicon</taxon>
    </lineage>
</organism>
<accession>Q08451</accession>
<sequence length="286" mass="30753">MAENKEEDVKLGANKFRETQPLGTAAQTDKDYKEPPPAPLFEPGELSSWSFYRAGIAEFMATFLFLYITILTVMGLKRSDSLCSSVGIQGVAWAFGGMIFALVYCTAGISGGHINPAVTFGLFLARKLSLTRAVFYMVMQCLGAICGAGVVKGFMVGPYQRLGGGANVVNPGYTKGDGLGAEIIGTFVLVYTVFSATDAKRNARDSHVPILAPLPIGFAVFLVHLATIPITGTGINPARSLGAAIIYNDEHAWNDHWIFWVGPMIGAALAAIYHQIIIRAMPFHRS</sequence>
<protein>
    <recommendedName>
        <fullName>Probable aquaporin PIP-type pTOM75</fullName>
    </recommendedName>
    <alternativeName>
        <fullName>Ripening-associated membrane protein</fullName>
        <shortName>RAMP</shortName>
    </alternativeName>
</protein>